<reference key="1">
    <citation type="journal article" date="2003" name="Science">
        <title>A genomic view of the human-Bacteroides thetaiotaomicron symbiosis.</title>
        <authorList>
            <person name="Xu J."/>
            <person name="Bjursell M.K."/>
            <person name="Himrod J."/>
            <person name="Deng S."/>
            <person name="Carmichael L.K."/>
            <person name="Chiang H.C."/>
            <person name="Hooper L.V."/>
            <person name="Gordon J.I."/>
        </authorList>
    </citation>
    <scope>NUCLEOTIDE SEQUENCE [LARGE SCALE GENOMIC DNA]</scope>
    <source>
        <strain>ATCC 29148 / DSM 2079 / JCM 5827 / CCUG 10774 / NCTC 10582 / VPI-5482 / E50</strain>
    </source>
</reference>
<gene>
    <name evidence="1" type="primary">rplB</name>
    <name type="ordered locus">BT_2724</name>
</gene>
<keyword id="KW-1185">Reference proteome</keyword>
<keyword id="KW-0687">Ribonucleoprotein</keyword>
<keyword id="KW-0689">Ribosomal protein</keyword>
<keyword id="KW-0694">RNA-binding</keyword>
<keyword id="KW-0699">rRNA-binding</keyword>
<feature type="chain" id="PRO_0000129530" description="Large ribosomal subunit protein uL2">
    <location>
        <begin position="1"/>
        <end position="274"/>
    </location>
</feature>
<feature type="region of interest" description="Disordered" evidence="2">
    <location>
        <begin position="195"/>
        <end position="274"/>
    </location>
</feature>
<feature type="compositionally biased region" description="Basic residues" evidence="2">
    <location>
        <begin position="207"/>
        <end position="220"/>
    </location>
</feature>
<feature type="compositionally biased region" description="Basic residues" evidence="2">
    <location>
        <begin position="244"/>
        <end position="264"/>
    </location>
</feature>
<protein>
    <recommendedName>
        <fullName evidence="1">Large ribosomal subunit protein uL2</fullName>
    </recommendedName>
    <alternativeName>
        <fullName evidence="3">50S ribosomal protein L2</fullName>
    </alternativeName>
</protein>
<proteinExistence type="inferred from homology"/>
<comment type="function">
    <text evidence="1">One of the primary rRNA binding proteins. Required for association of the 30S and 50S subunits to form the 70S ribosome, for tRNA binding and peptide bond formation. It has been suggested to have peptidyltransferase activity; this is somewhat controversial. Makes several contacts with the 16S rRNA in the 70S ribosome.</text>
</comment>
<comment type="subunit">
    <text evidence="1">Part of the 50S ribosomal subunit. Forms a bridge to the 30S subunit in the 70S ribosome.</text>
</comment>
<comment type="similarity">
    <text evidence="1">Belongs to the universal ribosomal protein uL2 family.</text>
</comment>
<sequence length="274" mass="29818">MAVRKLKPTTPGQRHKIIGTFEEITASVPEKSLVYGKKSSGGRNNEGKMTMRYIGGGHRKVIRIVDFKRNKDGVPAVVKTIEYDPNRSARIALLYYADGEKRYIIAPNGLQVGATLMSGETAAPEIGNTLPLQNIPVGTVIHNIELRPGQGAALVRSAGNFAQLTSREGKYCVIKLPSGEVRQILSTCKATIGSVGNSDHGLERSGKAGRSRWQGRRPRNRGVVMNPVDHPMGGGEGRSSGGHPRSRKGLYAKGLKTRAPKKQSSKYIIERRKK</sequence>
<accession>Q8A479</accession>
<organism>
    <name type="scientific">Bacteroides thetaiotaomicron (strain ATCC 29148 / DSM 2079 / JCM 5827 / CCUG 10774 / NCTC 10582 / VPI-5482 / E50)</name>
    <dbReference type="NCBI Taxonomy" id="226186"/>
    <lineage>
        <taxon>Bacteria</taxon>
        <taxon>Pseudomonadati</taxon>
        <taxon>Bacteroidota</taxon>
        <taxon>Bacteroidia</taxon>
        <taxon>Bacteroidales</taxon>
        <taxon>Bacteroidaceae</taxon>
        <taxon>Bacteroides</taxon>
    </lineage>
</organism>
<dbReference type="EMBL" id="AE015928">
    <property type="protein sequence ID" value="AAO77830.1"/>
    <property type="molecule type" value="Genomic_DNA"/>
</dbReference>
<dbReference type="RefSeq" id="NP_811636.1">
    <property type="nucleotide sequence ID" value="NC_004663.1"/>
</dbReference>
<dbReference type="RefSeq" id="WP_008765427.1">
    <property type="nucleotide sequence ID" value="NZ_UYXG01000001.1"/>
</dbReference>
<dbReference type="SMR" id="Q8A479"/>
<dbReference type="FunCoup" id="Q8A479">
    <property type="interactions" value="731"/>
</dbReference>
<dbReference type="STRING" id="226186.BT_2724"/>
<dbReference type="PaxDb" id="226186-BT_2724"/>
<dbReference type="EnsemblBacteria" id="AAO77830">
    <property type="protein sequence ID" value="AAO77830"/>
    <property type="gene ID" value="BT_2724"/>
</dbReference>
<dbReference type="GeneID" id="69587584"/>
<dbReference type="KEGG" id="bth:BT_2724"/>
<dbReference type="PATRIC" id="fig|226186.12.peg.2767"/>
<dbReference type="eggNOG" id="COG0090">
    <property type="taxonomic scope" value="Bacteria"/>
</dbReference>
<dbReference type="HOGENOM" id="CLU_036235_2_1_10"/>
<dbReference type="InParanoid" id="Q8A479"/>
<dbReference type="OrthoDB" id="9778722at2"/>
<dbReference type="Proteomes" id="UP000001414">
    <property type="component" value="Chromosome"/>
</dbReference>
<dbReference type="GO" id="GO:0015934">
    <property type="term" value="C:large ribosomal subunit"/>
    <property type="evidence" value="ECO:0007669"/>
    <property type="project" value="InterPro"/>
</dbReference>
<dbReference type="GO" id="GO:0003723">
    <property type="term" value="F:RNA binding"/>
    <property type="evidence" value="ECO:0000318"/>
    <property type="project" value="GO_Central"/>
</dbReference>
<dbReference type="GO" id="GO:0019843">
    <property type="term" value="F:rRNA binding"/>
    <property type="evidence" value="ECO:0007669"/>
    <property type="project" value="UniProtKB-UniRule"/>
</dbReference>
<dbReference type="GO" id="GO:0003735">
    <property type="term" value="F:structural constituent of ribosome"/>
    <property type="evidence" value="ECO:0000318"/>
    <property type="project" value="GO_Central"/>
</dbReference>
<dbReference type="GO" id="GO:0016740">
    <property type="term" value="F:transferase activity"/>
    <property type="evidence" value="ECO:0007669"/>
    <property type="project" value="InterPro"/>
</dbReference>
<dbReference type="GO" id="GO:0002181">
    <property type="term" value="P:cytoplasmic translation"/>
    <property type="evidence" value="ECO:0000318"/>
    <property type="project" value="GO_Central"/>
</dbReference>
<dbReference type="FunFam" id="2.30.30.30:FF:000001">
    <property type="entry name" value="50S ribosomal protein L2"/>
    <property type="match status" value="1"/>
</dbReference>
<dbReference type="FunFam" id="2.40.50.140:FF:000003">
    <property type="entry name" value="50S ribosomal protein L2"/>
    <property type="match status" value="1"/>
</dbReference>
<dbReference type="FunFam" id="4.10.950.10:FF:000001">
    <property type="entry name" value="50S ribosomal protein L2"/>
    <property type="match status" value="1"/>
</dbReference>
<dbReference type="Gene3D" id="2.30.30.30">
    <property type="match status" value="1"/>
</dbReference>
<dbReference type="Gene3D" id="2.40.50.140">
    <property type="entry name" value="Nucleic acid-binding proteins"/>
    <property type="match status" value="1"/>
</dbReference>
<dbReference type="Gene3D" id="4.10.950.10">
    <property type="entry name" value="Ribosomal protein L2, domain 3"/>
    <property type="match status" value="1"/>
</dbReference>
<dbReference type="HAMAP" id="MF_01320_B">
    <property type="entry name" value="Ribosomal_uL2_B"/>
    <property type="match status" value="1"/>
</dbReference>
<dbReference type="InterPro" id="IPR012340">
    <property type="entry name" value="NA-bd_OB-fold"/>
</dbReference>
<dbReference type="InterPro" id="IPR014722">
    <property type="entry name" value="Rib_uL2_dom2"/>
</dbReference>
<dbReference type="InterPro" id="IPR002171">
    <property type="entry name" value="Ribosomal_uL2"/>
</dbReference>
<dbReference type="InterPro" id="IPR005880">
    <property type="entry name" value="Ribosomal_uL2_bac/org-type"/>
</dbReference>
<dbReference type="InterPro" id="IPR022669">
    <property type="entry name" value="Ribosomal_uL2_C"/>
</dbReference>
<dbReference type="InterPro" id="IPR022671">
    <property type="entry name" value="Ribosomal_uL2_CS"/>
</dbReference>
<dbReference type="InterPro" id="IPR014726">
    <property type="entry name" value="Ribosomal_uL2_dom3"/>
</dbReference>
<dbReference type="InterPro" id="IPR022666">
    <property type="entry name" value="Ribosomal_uL2_RNA-bd_dom"/>
</dbReference>
<dbReference type="InterPro" id="IPR008991">
    <property type="entry name" value="Translation_prot_SH3-like_sf"/>
</dbReference>
<dbReference type="NCBIfam" id="TIGR01171">
    <property type="entry name" value="rplB_bact"/>
    <property type="match status" value="1"/>
</dbReference>
<dbReference type="PANTHER" id="PTHR13691:SF5">
    <property type="entry name" value="LARGE RIBOSOMAL SUBUNIT PROTEIN UL2M"/>
    <property type="match status" value="1"/>
</dbReference>
<dbReference type="PANTHER" id="PTHR13691">
    <property type="entry name" value="RIBOSOMAL PROTEIN L2"/>
    <property type="match status" value="1"/>
</dbReference>
<dbReference type="Pfam" id="PF00181">
    <property type="entry name" value="Ribosomal_L2"/>
    <property type="match status" value="1"/>
</dbReference>
<dbReference type="Pfam" id="PF03947">
    <property type="entry name" value="Ribosomal_L2_C"/>
    <property type="match status" value="1"/>
</dbReference>
<dbReference type="PIRSF" id="PIRSF002158">
    <property type="entry name" value="Ribosomal_L2"/>
    <property type="match status" value="1"/>
</dbReference>
<dbReference type="SMART" id="SM01383">
    <property type="entry name" value="Ribosomal_L2"/>
    <property type="match status" value="1"/>
</dbReference>
<dbReference type="SMART" id="SM01382">
    <property type="entry name" value="Ribosomal_L2_C"/>
    <property type="match status" value="1"/>
</dbReference>
<dbReference type="SUPFAM" id="SSF50249">
    <property type="entry name" value="Nucleic acid-binding proteins"/>
    <property type="match status" value="1"/>
</dbReference>
<dbReference type="SUPFAM" id="SSF50104">
    <property type="entry name" value="Translation proteins SH3-like domain"/>
    <property type="match status" value="1"/>
</dbReference>
<dbReference type="PROSITE" id="PS00467">
    <property type="entry name" value="RIBOSOMAL_L2"/>
    <property type="match status" value="1"/>
</dbReference>
<evidence type="ECO:0000255" key="1">
    <source>
        <dbReference type="HAMAP-Rule" id="MF_01320"/>
    </source>
</evidence>
<evidence type="ECO:0000256" key="2">
    <source>
        <dbReference type="SAM" id="MobiDB-lite"/>
    </source>
</evidence>
<evidence type="ECO:0000305" key="3"/>
<name>RL2_BACTN</name>